<sequence length="766" mass="87241">AGGKQILSDGPFSEVLRSAQEAIVVPPFVAIAVRPRPGVWEYVRVNVSELNVEQLTVSEYLHFKEELVDGKADDHYVLELDFEPFNESVPRPTRSSSIGNGVQFLNRHLSSSMFCNKDCLEPLLDFLRVHKHKGVVMMLNDRIQTIQRLQSALSKAEDYLIKLPADTPYSEFEFVIQGMGFERGWGDTAERVLEMMHLLLDILQAPDPSTLETFLGRLPMVFNVVILSVHGYFGQAHVLGLPDTGGQIVYILDQVRSLEHEMLQRIKKQGLDVTPRILIVSRLIPDAKGTTCNQRMEKVSGTEHASILRVPFRSEKGILRKWISRFDVWPYLETFTEDAAGEIIGELQGRPDLIIGNYSDGNIVASLLSHKMGVTQCNIAHALEKTKYPDSDIYWKRFEDKYHFSCQFSADLMAMNHADFIITSTYQEIAGTKNTVGQYESHKAFTFPGLYRVVHGIDVFDPKFNIVSPGADMAIYFPFSEKDVTCLTSLHRLIEQLLFKPEQNEEHIGVLDDTSKPIIFSMARLDRVKNITGLVECYGKNAKLRELANLVVVAGYNDVKKSNDREEIAEIEKMHRLIQEYNLRGQFRWIASQTNRVRNGELYRYICDKGGIFAQPAFYEAFGLTVVEAMTCGLPTFATCHGGPAEIIEDGVSGFHIDPYHADQAEKMTEFFVKCREDPNYWTKISAGGLLRIKERYTWQKYSERLMTLAGVYGFWKYVSKLERRETRRYLEMFYILKFRDLANSVPLATDEEPSTTDAVATFRGP</sequence>
<dbReference type="EC" id="2.4.1.13"/>
<dbReference type="EMBL" id="X81974">
    <property type="protein sequence ID" value="CAA57499.1"/>
    <property type="molecule type" value="mRNA"/>
</dbReference>
<dbReference type="PIR" id="S71493">
    <property type="entry name" value="S71493"/>
</dbReference>
<dbReference type="SMR" id="Q42652"/>
<dbReference type="CAZy" id="GT4">
    <property type="family name" value="Glycosyltransferase Family 4"/>
</dbReference>
<dbReference type="GO" id="GO:0016157">
    <property type="term" value="F:sucrose synthase activity"/>
    <property type="evidence" value="ECO:0007669"/>
    <property type="project" value="UniProtKB-EC"/>
</dbReference>
<dbReference type="GO" id="GO:0005985">
    <property type="term" value="P:sucrose metabolic process"/>
    <property type="evidence" value="ECO:0007669"/>
    <property type="project" value="InterPro"/>
</dbReference>
<dbReference type="FunFam" id="1.20.120.1230:FF:000001">
    <property type="entry name" value="Sucrose synthase"/>
    <property type="match status" value="1"/>
</dbReference>
<dbReference type="FunFam" id="3.40.50.2000:FF:000006">
    <property type="entry name" value="Sucrose synthase"/>
    <property type="match status" value="1"/>
</dbReference>
<dbReference type="Gene3D" id="1.20.120.1230">
    <property type="match status" value="1"/>
</dbReference>
<dbReference type="Gene3D" id="3.10.450.330">
    <property type="match status" value="1"/>
</dbReference>
<dbReference type="Gene3D" id="3.40.50.2000">
    <property type="entry name" value="Glycogen Phosphorylase B"/>
    <property type="match status" value="2"/>
</dbReference>
<dbReference type="InterPro" id="IPR001296">
    <property type="entry name" value="Glyco_trans_1"/>
</dbReference>
<dbReference type="InterPro" id="IPR000368">
    <property type="entry name" value="Sucrose_synth_GT-B1"/>
</dbReference>
<dbReference type="InterPro" id="IPR012820">
    <property type="entry name" value="Sucrose_synthase_pln/cyn"/>
</dbReference>
<dbReference type="InterPro" id="IPR056736">
    <property type="entry name" value="SUS_EPBD"/>
</dbReference>
<dbReference type="InterPro" id="IPR056735">
    <property type="entry name" value="SUS_N"/>
</dbReference>
<dbReference type="NCBIfam" id="TIGR02470">
    <property type="entry name" value="sucr_synth"/>
    <property type="match status" value="1"/>
</dbReference>
<dbReference type="PANTHER" id="PTHR45839">
    <property type="match status" value="1"/>
</dbReference>
<dbReference type="PANTHER" id="PTHR45839:SF13">
    <property type="entry name" value="SUCROSE SYNTHASE 3"/>
    <property type="match status" value="1"/>
</dbReference>
<dbReference type="Pfam" id="PF00534">
    <property type="entry name" value="Glycos_transf_1"/>
    <property type="match status" value="1"/>
</dbReference>
<dbReference type="Pfam" id="PF00862">
    <property type="entry name" value="GT-B_Sucrose_synth"/>
    <property type="match status" value="1"/>
</dbReference>
<dbReference type="Pfam" id="PF24862">
    <property type="entry name" value="SUS_EPBD"/>
    <property type="match status" value="1"/>
</dbReference>
<dbReference type="Pfam" id="PF24861">
    <property type="entry name" value="SUS_N"/>
    <property type="match status" value="1"/>
</dbReference>
<dbReference type="SUPFAM" id="SSF53756">
    <property type="entry name" value="UDP-Glycosyltransferase/glycogen phosphorylase"/>
    <property type="match status" value="1"/>
</dbReference>
<protein>
    <recommendedName>
        <fullName>Sucrose synthase</fullName>
        <ecNumber>2.4.1.13</ecNumber>
    </recommendedName>
    <alternativeName>
        <fullName>Sucrose-UDP glucosyltransferase</fullName>
    </alternativeName>
</protein>
<name>SUS_BETVU</name>
<proteinExistence type="evidence at transcript level"/>
<evidence type="ECO:0000250" key="1">
    <source>
        <dbReference type="UniProtKB" id="P49040"/>
    </source>
</evidence>
<evidence type="ECO:0000305" key="2"/>
<gene>
    <name type="primary">SS1</name>
</gene>
<feature type="chain" id="PRO_0000204646" description="Sucrose synthase">
    <location>
        <begin position="1" status="less than"/>
        <end position="766"/>
    </location>
</feature>
<feature type="region of interest" description="GT-B glycosyltransferase" evidence="1">
    <location>
        <begin position="220"/>
        <end position="698"/>
    </location>
</feature>
<feature type="non-terminal residue">
    <location>
        <position position="1"/>
    </location>
</feature>
<organism>
    <name type="scientific">Beta vulgaris</name>
    <name type="common">Sugar beet</name>
    <dbReference type="NCBI Taxonomy" id="161934"/>
    <lineage>
        <taxon>Eukaryota</taxon>
        <taxon>Viridiplantae</taxon>
        <taxon>Streptophyta</taxon>
        <taxon>Embryophyta</taxon>
        <taxon>Tracheophyta</taxon>
        <taxon>Spermatophyta</taxon>
        <taxon>Magnoliopsida</taxon>
        <taxon>eudicotyledons</taxon>
        <taxon>Gunneridae</taxon>
        <taxon>Pentapetalae</taxon>
        <taxon>Caryophyllales</taxon>
        <taxon>Chenopodiaceae</taxon>
        <taxon>Betoideae</taxon>
        <taxon>Beta</taxon>
    </lineage>
</organism>
<comment type="function">
    <text>Sucrose-cleaving enzyme that provides UDP-glucose and fructose for various metabolic pathways.</text>
</comment>
<comment type="catalytic activity">
    <reaction>
        <text>an NDP-alpha-D-glucose + D-fructose = a ribonucleoside 5'-diphosphate + sucrose + H(+)</text>
        <dbReference type="Rhea" id="RHEA:16241"/>
        <dbReference type="ChEBI" id="CHEBI:15378"/>
        <dbReference type="ChEBI" id="CHEBI:17992"/>
        <dbReference type="ChEBI" id="CHEBI:37721"/>
        <dbReference type="ChEBI" id="CHEBI:57930"/>
        <dbReference type="ChEBI" id="CHEBI:76533"/>
        <dbReference type="EC" id="2.4.1.13"/>
    </reaction>
</comment>
<comment type="tissue specificity">
    <text>Expressed most predominantly in tap root.</text>
</comment>
<comment type="similarity">
    <text evidence="2">Belongs to the glycosyltransferase 1 family. Plant sucrose synthase subfamily.</text>
</comment>
<keyword id="KW-0328">Glycosyltransferase</keyword>
<keyword id="KW-0808">Transferase</keyword>
<reference key="1">
    <citation type="journal article" date="1996" name="Plant Mol. Biol.">
        <title>Expression analysis of a sucrose synthase gene from sugar beet (Beta vulgaris L.).</title>
        <authorList>
            <person name="Hesse H."/>
            <person name="Willmitzer L."/>
        </authorList>
    </citation>
    <scope>NUCLEOTIDE SEQUENCE [MRNA]</scope>
    <source>
        <tissue>Tap root</tissue>
    </source>
</reference>
<accession>Q42652</accession>